<protein>
    <recommendedName>
        <fullName evidence="1">Glucose-6-phosphate isomerase</fullName>
        <shortName evidence="1">GPI</shortName>
        <ecNumber evidence="1">5.3.1.9</ecNumber>
    </recommendedName>
    <alternativeName>
        <fullName evidence="1">Phosphoglucose isomerase</fullName>
        <shortName evidence="1">PGI</shortName>
    </alternativeName>
    <alternativeName>
        <fullName evidence="1">Phosphohexose isomerase</fullName>
        <shortName evidence="1">PHI</shortName>
    </alternativeName>
</protein>
<name>G6PI_PROMH</name>
<evidence type="ECO:0000255" key="1">
    <source>
        <dbReference type="HAMAP-Rule" id="MF_00473"/>
    </source>
</evidence>
<comment type="function">
    <text evidence="1">Catalyzes the reversible isomerization of glucose-6-phosphate to fructose-6-phosphate.</text>
</comment>
<comment type="catalytic activity">
    <reaction evidence="1">
        <text>alpha-D-glucose 6-phosphate = beta-D-fructose 6-phosphate</text>
        <dbReference type="Rhea" id="RHEA:11816"/>
        <dbReference type="ChEBI" id="CHEBI:57634"/>
        <dbReference type="ChEBI" id="CHEBI:58225"/>
        <dbReference type="EC" id="5.3.1.9"/>
    </reaction>
</comment>
<comment type="pathway">
    <text evidence="1">Carbohydrate biosynthesis; gluconeogenesis.</text>
</comment>
<comment type="pathway">
    <text evidence="1">Carbohydrate degradation; glycolysis; D-glyceraldehyde 3-phosphate and glycerone phosphate from D-glucose: step 2/4.</text>
</comment>
<comment type="subcellular location">
    <subcellularLocation>
        <location evidence="1">Cytoplasm</location>
    </subcellularLocation>
</comment>
<comment type="similarity">
    <text evidence="1">Belongs to the GPI family.</text>
</comment>
<proteinExistence type="inferred from homology"/>
<dbReference type="EC" id="5.3.1.9" evidence="1"/>
<dbReference type="EMBL" id="AM942759">
    <property type="protein sequence ID" value="CAR45430.1"/>
    <property type="molecule type" value="Genomic_DNA"/>
</dbReference>
<dbReference type="RefSeq" id="WP_004250104.1">
    <property type="nucleotide sequence ID" value="NC_010554.1"/>
</dbReference>
<dbReference type="SMR" id="B4EYR8"/>
<dbReference type="EnsemblBacteria" id="CAR45430">
    <property type="protein sequence ID" value="CAR45430"/>
    <property type="gene ID" value="PMI2754"/>
</dbReference>
<dbReference type="GeneID" id="6801939"/>
<dbReference type="KEGG" id="pmr:PMI2754"/>
<dbReference type="PATRIC" id="fig|529507.6.peg.2683"/>
<dbReference type="eggNOG" id="COG0166">
    <property type="taxonomic scope" value="Bacteria"/>
</dbReference>
<dbReference type="HOGENOM" id="CLU_017947_3_1_6"/>
<dbReference type="UniPathway" id="UPA00109">
    <property type="reaction ID" value="UER00181"/>
</dbReference>
<dbReference type="UniPathway" id="UPA00138"/>
<dbReference type="Proteomes" id="UP000008319">
    <property type="component" value="Chromosome"/>
</dbReference>
<dbReference type="GO" id="GO:0005829">
    <property type="term" value="C:cytosol"/>
    <property type="evidence" value="ECO:0007669"/>
    <property type="project" value="TreeGrafter"/>
</dbReference>
<dbReference type="GO" id="GO:0097367">
    <property type="term" value="F:carbohydrate derivative binding"/>
    <property type="evidence" value="ECO:0007669"/>
    <property type="project" value="InterPro"/>
</dbReference>
<dbReference type="GO" id="GO:0004347">
    <property type="term" value="F:glucose-6-phosphate isomerase activity"/>
    <property type="evidence" value="ECO:0007669"/>
    <property type="project" value="UniProtKB-UniRule"/>
</dbReference>
<dbReference type="GO" id="GO:0048029">
    <property type="term" value="F:monosaccharide binding"/>
    <property type="evidence" value="ECO:0007669"/>
    <property type="project" value="TreeGrafter"/>
</dbReference>
<dbReference type="GO" id="GO:0006094">
    <property type="term" value="P:gluconeogenesis"/>
    <property type="evidence" value="ECO:0007669"/>
    <property type="project" value="UniProtKB-UniRule"/>
</dbReference>
<dbReference type="GO" id="GO:0051156">
    <property type="term" value="P:glucose 6-phosphate metabolic process"/>
    <property type="evidence" value="ECO:0007669"/>
    <property type="project" value="TreeGrafter"/>
</dbReference>
<dbReference type="GO" id="GO:0006096">
    <property type="term" value="P:glycolytic process"/>
    <property type="evidence" value="ECO:0007669"/>
    <property type="project" value="UniProtKB-UniRule"/>
</dbReference>
<dbReference type="CDD" id="cd05015">
    <property type="entry name" value="SIS_PGI_1"/>
    <property type="match status" value="1"/>
</dbReference>
<dbReference type="CDD" id="cd05016">
    <property type="entry name" value="SIS_PGI_2"/>
    <property type="match status" value="1"/>
</dbReference>
<dbReference type="FunFam" id="1.10.1390.10:FF:000001">
    <property type="entry name" value="Glucose-6-phosphate isomerase"/>
    <property type="match status" value="1"/>
</dbReference>
<dbReference type="FunFam" id="3.40.50.10490:FF:000004">
    <property type="entry name" value="Glucose-6-phosphate isomerase"/>
    <property type="match status" value="1"/>
</dbReference>
<dbReference type="Gene3D" id="1.10.1390.10">
    <property type="match status" value="1"/>
</dbReference>
<dbReference type="Gene3D" id="3.40.50.10490">
    <property type="entry name" value="Glucose-6-phosphate isomerase like protein, domain 1"/>
    <property type="match status" value="2"/>
</dbReference>
<dbReference type="HAMAP" id="MF_00473">
    <property type="entry name" value="G6P_isomerase"/>
    <property type="match status" value="1"/>
</dbReference>
<dbReference type="InterPro" id="IPR001672">
    <property type="entry name" value="G6P_Isomerase"/>
</dbReference>
<dbReference type="InterPro" id="IPR023096">
    <property type="entry name" value="G6P_Isomerase_C"/>
</dbReference>
<dbReference type="InterPro" id="IPR018189">
    <property type="entry name" value="Phosphoglucose_isomerase_CS"/>
</dbReference>
<dbReference type="InterPro" id="IPR046348">
    <property type="entry name" value="SIS_dom_sf"/>
</dbReference>
<dbReference type="InterPro" id="IPR035476">
    <property type="entry name" value="SIS_PGI_1"/>
</dbReference>
<dbReference type="InterPro" id="IPR035482">
    <property type="entry name" value="SIS_PGI_2"/>
</dbReference>
<dbReference type="NCBIfam" id="NF001211">
    <property type="entry name" value="PRK00179.1"/>
    <property type="match status" value="1"/>
</dbReference>
<dbReference type="PANTHER" id="PTHR11469">
    <property type="entry name" value="GLUCOSE-6-PHOSPHATE ISOMERASE"/>
    <property type="match status" value="1"/>
</dbReference>
<dbReference type="PANTHER" id="PTHR11469:SF1">
    <property type="entry name" value="GLUCOSE-6-PHOSPHATE ISOMERASE"/>
    <property type="match status" value="1"/>
</dbReference>
<dbReference type="Pfam" id="PF00342">
    <property type="entry name" value="PGI"/>
    <property type="match status" value="1"/>
</dbReference>
<dbReference type="PRINTS" id="PR00662">
    <property type="entry name" value="G6PISOMERASE"/>
</dbReference>
<dbReference type="SUPFAM" id="SSF53697">
    <property type="entry name" value="SIS domain"/>
    <property type="match status" value="1"/>
</dbReference>
<dbReference type="PROSITE" id="PS00765">
    <property type="entry name" value="P_GLUCOSE_ISOMERASE_1"/>
    <property type="match status" value="1"/>
</dbReference>
<dbReference type="PROSITE" id="PS00174">
    <property type="entry name" value="P_GLUCOSE_ISOMERASE_2"/>
    <property type="match status" value="1"/>
</dbReference>
<dbReference type="PROSITE" id="PS51463">
    <property type="entry name" value="P_GLUCOSE_ISOMERASE_3"/>
    <property type="match status" value="1"/>
</dbReference>
<organism>
    <name type="scientific">Proteus mirabilis (strain HI4320)</name>
    <dbReference type="NCBI Taxonomy" id="529507"/>
    <lineage>
        <taxon>Bacteria</taxon>
        <taxon>Pseudomonadati</taxon>
        <taxon>Pseudomonadota</taxon>
        <taxon>Gammaproteobacteria</taxon>
        <taxon>Enterobacterales</taxon>
        <taxon>Morganellaceae</taxon>
        <taxon>Proteus</taxon>
    </lineage>
</organism>
<reference key="1">
    <citation type="journal article" date="2008" name="J. Bacteriol.">
        <title>Complete genome sequence of uropathogenic Proteus mirabilis, a master of both adherence and motility.</title>
        <authorList>
            <person name="Pearson M.M."/>
            <person name="Sebaihia M."/>
            <person name="Churcher C."/>
            <person name="Quail M.A."/>
            <person name="Seshasayee A.S."/>
            <person name="Luscombe N.M."/>
            <person name="Abdellah Z."/>
            <person name="Arrosmith C."/>
            <person name="Atkin B."/>
            <person name="Chillingworth T."/>
            <person name="Hauser H."/>
            <person name="Jagels K."/>
            <person name="Moule S."/>
            <person name="Mungall K."/>
            <person name="Norbertczak H."/>
            <person name="Rabbinowitsch E."/>
            <person name="Walker D."/>
            <person name="Whithead S."/>
            <person name="Thomson N.R."/>
            <person name="Rather P.N."/>
            <person name="Parkhill J."/>
            <person name="Mobley H.L.T."/>
        </authorList>
    </citation>
    <scope>NUCLEOTIDE SEQUENCE [LARGE SCALE GENOMIC DNA]</scope>
    <source>
        <strain>HI4320</strain>
    </source>
</reference>
<keyword id="KW-0963">Cytoplasm</keyword>
<keyword id="KW-0312">Gluconeogenesis</keyword>
<keyword id="KW-0324">Glycolysis</keyword>
<keyword id="KW-0413">Isomerase</keyword>
<keyword id="KW-1185">Reference proteome</keyword>
<gene>
    <name evidence="1" type="primary">pgi</name>
    <name type="ordered locus">PMI2754</name>
</gene>
<feature type="chain" id="PRO_1000125744" description="Glucose-6-phosphate isomerase">
    <location>
        <begin position="1"/>
        <end position="548"/>
    </location>
</feature>
<feature type="active site" description="Proton donor" evidence="1">
    <location>
        <position position="355"/>
    </location>
</feature>
<feature type="active site" evidence="1">
    <location>
        <position position="386"/>
    </location>
</feature>
<feature type="active site" evidence="1">
    <location>
        <position position="514"/>
    </location>
</feature>
<sequence>MKNVNPTHTLAWKALEDHFAVMKDTEMKTLFSQDPSRFNTFSRTFSDQILVDFSKNRITQETLDKLQALAKECDVAGAIKSMFSGEKINCTEDRAVLHTALRNRSNTPVMVDGKDVMPEVNAVLHKMKVFSERVISGEWKGYTGKAITDVVNIGIGGSDLGPYMVTEALRPYKNHLTMHFVSNVDGTHIAETLKKCDPETTLFLIASKTFTTQETMTNAHSARDWFLSAAKESAFVAKHFVALSTNSAEVEKFGIDTANMFEFWDWVGGRYSLWSAIGLSIVLSIGYDNFEQLLSGAHAMDNHFRTTEAENNIPMILALIGIWYNNFFGTETEAILPYDQYMHRFAAYFQQGNMESNGKYIDRDGNKVSYQTGPIIWGEPGTNGQHAFYQLIHQGTKLIPCDFIAPAISHNPLSDHHAKLMSNFFAQTEALAFGKTREQVDAEFASAGKDPATMGYVAPFKVFEGNRPTNSILLKEITPYSLGALIAMYEHKIFVQGVIFNIFTFDQWGVELGKQLANRILPELKGKESVNSHDSSTNNLINRYKAWR</sequence>
<accession>B4EYR8</accession>